<gene>
    <name evidence="2" type="primary">Faap100</name>
</gene>
<feature type="chain" id="PRO_0000289131" description="Fanconi anemia core complex-associated protein 100">
    <location>
        <begin position="1"/>
        <end position="879"/>
    </location>
</feature>
<feature type="sequence conflict" description="In Ref. 1; AK148234." evidence="3" ref="1">
    <original>S</original>
    <variation>P</variation>
    <location>
        <position position="436"/>
    </location>
</feature>
<feature type="sequence conflict" description="In Ref. 1; AK148234." evidence="3" ref="1">
    <original>S</original>
    <variation>G</variation>
    <location>
        <position position="856"/>
    </location>
</feature>
<sequence length="879" mass="94281">MAGASSRVHYLSDFCCPLGGRAAGKPFVLRHEAEVFLSTGREFVYVYDQEGGLLTAVYQFPDQVWHLQLLAIRRALYVLCARTGIYCLSLDSLDRSGSQACEDKEEAAPPYPVIHVDPDACVLPDAALCAFTVLDDMLVTLAQGPTQWKMQLFERPCAGEEPLPRGQIGEVELSTCTPPGGVPEKPAAPRFLPVLCCVFPPDSRAPHGHPQGCGCFTLEEALFGLLFGVDATLLQSPVILCGLPDGQLCCVVLKALVTSGLAPGDPKVLVKILHHLEEPVIFIGALRAEPHEEEAAGELLPGQHEHSDCLVALGHQGRTLAIKASWSESGNLVPELREYCLPGPVLCAACDRDGHVYHSTPSDLCVVDLTRRDSPWNPEKPDGAIGGLPSVLCPASLNICSALALCVTARAPTGSTELLALSSKGRLITCSLDLNSEAPVPAKMAMANAGQKIKELLLDIGDVSERVSFLKKAVDQRNKAITSLNEAMNVSCALLSHPEGDRPIACTITTSWSRLELRDMLMATCTLENSSSFSLDQGWTLCIQVLTSSSALDLDGTGSAFTYTIPVDRLGPGSRREVTLPLGPSESGVLDLPVTMSCWLFYSLREVVGAALAPSDPLEAPYLEQFPLSLPKQEGVCLPLCKRTVDMLQCLRFAGAATHPAQAPCMPGPACEPVETFLKTCQAPGSEPTGAASLRAKYLPPSTASIRVSAGLLRAALEDSHSGFHLCSATLRWLLAENAAVDVVRAQTLSSIQGIAPDGTDVNLTVHEVAVTDLSPAGPIQAVEIQVESSSLANMCRAHHAIIRRIQTMVTEQAALGSSPPDLRMQYLQQIHANHQELLREVQALRDQLCTEDELSSCSTAQKLLHIYKQLRNPSLVLL</sequence>
<evidence type="ECO:0000250" key="1"/>
<evidence type="ECO:0000250" key="2">
    <source>
        <dbReference type="UniProtKB" id="Q0VG06"/>
    </source>
</evidence>
<evidence type="ECO:0000305" key="3"/>
<organism>
    <name type="scientific">Mus musculus</name>
    <name type="common">Mouse</name>
    <dbReference type="NCBI Taxonomy" id="10090"/>
    <lineage>
        <taxon>Eukaryota</taxon>
        <taxon>Metazoa</taxon>
        <taxon>Chordata</taxon>
        <taxon>Craniata</taxon>
        <taxon>Vertebrata</taxon>
        <taxon>Euteleostomi</taxon>
        <taxon>Mammalia</taxon>
        <taxon>Eutheria</taxon>
        <taxon>Euarchontoglires</taxon>
        <taxon>Glires</taxon>
        <taxon>Rodentia</taxon>
        <taxon>Myomorpha</taxon>
        <taxon>Muroidea</taxon>
        <taxon>Muridae</taxon>
        <taxon>Murinae</taxon>
        <taxon>Mus</taxon>
        <taxon>Mus</taxon>
    </lineage>
</organism>
<accession>A2ACJ2</accession>
<accession>Q0P653</accession>
<accession>Q810W2</accession>
<dbReference type="EMBL" id="AK148234">
    <property type="status" value="NOT_ANNOTATED_CDS"/>
    <property type="molecule type" value="mRNA"/>
</dbReference>
<dbReference type="EMBL" id="AL669855">
    <property type="status" value="NOT_ANNOTATED_CDS"/>
    <property type="molecule type" value="Genomic_DNA"/>
</dbReference>
<dbReference type="EMBL" id="BC034203">
    <property type="protein sequence ID" value="AAH34203.1"/>
    <property type="status" value="ALT_INIT"/>
    <property type="molecule type" value="mRNA"/>
</dbReference>
<dbReference type="EMBL" id="BC048376">
    <property type="protein sequence ID" value="AAH48376.1"/>
    <property type="status" value="ALT_INIT"/>
    <property type="molecule type" value="mRNA"/>
</dbReference>
<dbReference type="CCDS" id="CCDS49004.1"/>
<dbReference type="RefSeq" id="NP_082256.2">
    <property type="nucleotide sequence ID" value="NM_027980.2"/>
</dbReference>
<dbReference type="SMR" id="A2ACJ2"/>
<dbReference type="BioGRID" id="215005">
    <property type="interactions" value="9"/>
</dbReference>
<dbReference type="FunCoup" id="A2ACJ2">
    <property type="interactions" value="1589"/>
</dbReference>
<dbReference type="IntAct" id="A2ACJ2">
    <property type="interactions" value="8"/>
</dbReference>
<dbReference type="STRING" id="10090.ENSMUSP00000026448"/>
<dbReference type="iPTMnet" id="A2ACJ2"/>
<dbReference type="PhosphoSitePlus" id="A2ACJ2"/>
<dbReference type="PaxDb" id="10090-ENSMUSP00000026448"/>
<dbReference type="ProteomicsDB" id="271718"/>
<dbReference type="Pumba" id="A2ACJ2"/>
<dbReference type="Antibodypedia" id="19824">
    <property type="antibodies" value="69 antibodies from 17 providers"/>
</dbReference>
<dbReference type="DNASU" id="71885"/>
<dbReference type="Ensembl" id="ENSMUST00000026448.10">
    <property type="protein sequence ID" value="ENSMUSP00000026448.10"/>
    <property type="gene ID" value="ENSMUSG00000025384.16"/>
</dbReference>
<dbReference type="GeneID" id="71885"/>
<dbReference type="KEGG" id="mmu:71885"/>
<dbReference type="UCSC" id="uc007msm.2">
    <property type="organism name" value="mouse"/>
</dbReference>
<dbReference type="AGR" id="MGI:1919135"/>
<dbReference type="CTD" id="80233"/>
<dbReference type="MGI" id="MGI:1919135">
    <property type="gene designation" value="Faap100"/>
</dbReference>
<dbReference type="VEuPathDB" id="HostDB:ENSMUSG00000025384"/>
<dbReference type="eggNOG" id="ENOG502QTI0">
    <property type="taxonomic scope" value="Eukaryota"/>
</dbReference>
<dbReference type="GeneTree" id="ENSGT00390000016682"/>
<dbReference type="HOGENOM" id="CLU_018470_0_0_1"/>
<dbReference type="InParanoid" id="A2ACJ2"/>
<dbReference type="OMA" id="RVHHAVI"/>
<dbReference type="OrthoDB" id="6495021at2759"/>
<dbReference type="PhylomeDB" id="A2ACJ2"/>
<dbReference type="TreeFam" id="TF330817"/>
<dbReference type="Reactome" id="R-MMU-6783310">
    <property type="pathway name" value="Fanconi Anemia Pathway"/>
</dbReference>
<dbReference type="Reactome" id="R-MMU-9833482">
    <property type="pathway name" value="PKR-mediated signaling"/>
</dbReference>
<dbReference type="BioGRID-ORCS" id="71885">
    <property type="hits" value="29 hits in 80 CRISPR screens"/>
</dbReference>
<dbReference type="ChiTaRS" id="Faap100">
    <property type="organism name" value="mouse"/>
</dbReference>
<dbReference type="PRO" id="PR:A2ACJ2"/>
<dbReference type="Proteomes" id="UP000000589">
    <property type="component" value="Chromosome 11"/>
</dbReference>
<dbReference type="RNAct" id="A2ACJ2">
    <property type="molecule type" value="protein"/>
</dbReference>
<dbReference type="Bgee" id="ENSMUSG00000025384">
    <property type="expression patterns" value="Expressed in retinal neural layer and 204 other cell types or tissues"/>
</dbReference>
<dbReference type="GO" id="GO:0000785">
    <property type="term" value="C:chromatin"/>
    <property type="evidence" value="ECO:0007669"/>
    <property type="project" value="Ensembl"/>
</dbReference>
<dbReference type="GO" id="GO:0005829">
    <property type="term" value="C:cytosol"/>
    <property type="evidence" value="ECO:0007669"/>
    <property type="project" value="Ensembl"/>
</dbReference>
<dbReference type="GO" id="GO:0043240">
    <property type="term" value="C:Fanconi anaemia nuclear complex"/>
    <property type="evidence" value="ECO:0007669"/>
    <property type="project" value="InterPro"/>
</dbReference>
<dbReference type="GO" id="GO:0005654">
    <property type="term" value="C:nucleoplasm"/>
    <property type="evidence" value="ECO:0007669"/>
    <property type="project" value="Ensembl"/>
</dbReference>
<dbReference type="GO" id="GO:0003677">
    <property type="term" value="F:DNA binding"/>
    <property type="evidence" value="ECO:0007669"/>
    <property type="project" value="UniProtKB-KW"/>
</dbReference>
<dbReference type="GO" id="GO:0036297">
    <property type="term" value="P:interstrand cross-link repair"/>
    <property type="evidence" value="ECO:0007669"/>
    <property type="project" value="InterPro"/>
</dbReference>
<dbReference type="InterPro" id="IPR029251">
    <property type="entry name" value="Faap100"/>
</dbReference>
<dbReference type="PANTHER" id="PTHR14890">
    <property type="entry name" value="FANCONI ANEMIA CORE COMPLEX-ASSOCIATED PROTEIN 100"/>
    <property type="match status" value="1"/>
</dbReference>
<dbReference type="PANTHER" id="PTHR14890:SF1">
    <property type="entry name" value="FANCONI ANEMIA CORE COMPLEX-ASSOCIATED PROTEIN 100"/>
    <property type="match status" value="1"/>
</dbReference>
<dbReference type="Pfam" id="PF15146">
    <property type="entry name" value="FANCAA"/>
    <property type="match status" value="1"/>
</dbReference>
<reference key="1">
    <citation type="journal article" date="2005" name="Science">
        <title>The transcriptional landscape of the mammalian genome.</title>
        <authorList>
            <person name="Carninci P."/>
            <person name="Kasukawa T."/>
            <person name="Katayama S."/>
            <person name="Gough J."/>
            <person name="Frith M.C."/>
            <person name="Maeda N."/>
            <person name="Oyama R."/>
            <person name="Ravasi T."/>
            <person name="Lenhard B."/>
            <person name="Wells C."/>
            <person name="Kodzius R."/>
            <person name="Shimokawa K."/>
            <person name="Bajic V.B."/>
            <person name="Brenner S.E."/>
            <person name="Batalov S."/>
            <person name="Forrest A.R."/>
            <person name="Zavolan M."/>
            <person name="Davis M.J."/>
            <person name="Wilming L.G."/>
            <person name="Aidinis V."/>
            <person name="Allen J.E."/>
            <person name="Ambesi-Impiombato A."/>
            <person name="Apweiler R."/>
            <person name="Aturaliya R.N."/>
            <person name="Bailey T.L."/>
            <person name="Bansal M."/>
            <person name="Baxter L."/>
            <person name="Beisel K.W."/>
            <person name="Bersano T."/>
            <person name="Bono H."/>
            <person name="Chalk A.M."/>
            <person name="Chiu K.P."/>
            <person name="Choudhary V."/>
            <person name="Christoffels A."/>
            <person name="Clutterbuck D.R."/>
            <person name="Crowe M.L."/>
            <person name="Dalla E."/>
            <person name="Dalrymple B.P."/>
            <person name="de Bono B."/>
            <person name="Della Gatta G."/>
            <person name="di Bernardo D."/>
            <person name="Down T."/>
            <person name="Engstrom P."/>
            <person name="Fagiolini M."/>
            <person name="Faulkner G."/>
            <person name="Fletcher C.F."/>
            <person name="Fukushima T."/>
            <person name="Furuno M."/>
            <person name="Futaki S."/>
            <person name="Gariboldi M."/>
            <person name="Georgii-Hemming P."/>
            <person name="Gingeras T.R."/>
            <person name="Gojobori T."/>
            <person name="Green R.E."/>
            <person name="Gustincich S."/>
            <person name="Harbers M."/>
            <person name="Hayashi Y."/>
            <person name="Hensch T.K."/>
            <person name="Hirokawa N."/>
            <person name="Hill D."/>
            <person name="Huminiecki L."/>
            <person name="Iacono M."/>
            <person name="Ikeo K."/>
            <person name="Iwama A."/>
            <person name="Ishikawa T."/>
            <person name="Jakt M."/>
            <person name="Kanapin A."/>
            <person name="Katoh M."/>
            <person name="Kawasawa Y."/>
            <person name="Kelso J."/>
            <person name="Kitamura H."/>
            <person name="Kitano H."/>
            <person name="Kollias G."/>
            <person name="Krishnan S.P."/>
            <person name="Kruger A."/>
            <person name="Kummerfeld S.K."/>
            <person name="Kurochkin I.V."/>
            <person name="Lareau L.F."/>
            <person name="Lazarevic D."/>
            <person name="Lipovich L."/>
            <person name="Liu J."/>
            <person name="Liuni S."/>
            <person name="McWilliam S."/>
            <person name="Madan Babu M."/>
            <person name="Madera M."/>
            <person name="Marchionni L."/>
            <person name="Matsuda H."/>
            <person name="Matsuzawa S."/>
            <person name="Miki H."/>
            <person name="Mignone F."/>
            <person name="Miyake S."/>
            <person name="Morris K."/>
            <person name="Mottagui-Tabar S."/>
            <person name="Mulder N."/>
            <person name="Nakano N."/>
            <person name="Nakauchi H."/>
            <person name="Ng P."/>
            <person name="Nilsson R."/>
            <person name="Nishiguchi S."/>
            <person name="Nishikawa S."/>
            <person name="Nori F."/>
            <person name="Ohara O."/>
            <person name="Okazaki Y."/>
            <person name="Orlando V."/>
            <person name="Pang K.C."/>
            <person name="Pavan W.J."/>
            <person name="Pavesi G."/>
            <person name="Pesole G."/>
            <person name="Petrovsky N."/>
            <person name="Piazza S."/>
            <person name="Reed J."/>
            <person name="Reid J.F."/>
            <person name="Ring B.Z."/>
            <person name="Ringwald M."/>
            <person name="Rost B."/>
            <person name="Ruan Y."/>
            <person name="Salzberg S.L."/>
            <person name="Sandelin A."/>
            <person name="Schneider C."/>
            <person name="Schoenbach C."/>
            <person name="Sekiguchi K."/>
            <person name="Semple C.A."/>
            <person name="Seno S."/>
            <person name="Sessa L."/>
            <person name="Sheng Y."/>
            <person name="Shibata Y."/>
            <person name="Shimada H."/>
            <person name="Shimada K."/>
            <person name="Silva D."/>
            <person name="Sinclair B."/>
            <person name="Sperling S."/>
            <person name="Stupka E."/>
            <person name="Sugiura K."/>
            <person name="Sultana R."/>
            <person name="Takenaka Y."/>
            <person name="Taki K."/>
            <person name="Tammoja K."/>
            <person name="Tan S.L."/>
            <person name="Tang S."/>
            <person name="Taylor M.S."/>
            <person name="Tegner J."/>
            <person name="Teichmann S.A."/>
            <person name="Ueda H.R."/>
            <person name="van Nimwegen E."/>
            <person name="Verardo R."/>
            <person name="Wei C.L."/>
            <person name="Yagi K."/>
            <person name="Yamanishi H."/>
            <person name="Zabarovsky E."/>
            <person name="Zhu S."/>
            <person name="Zimmer A."/>
            <person name="Hide W."/>
            <person name="Bult C."/>
            <person name="Grimmond S.M."/>
            <person name="Teasdale R.D."/>
            <person name="Liu E.T."/>
            <person name="Brusic V."/>
            <person name="Quackenbush J."/>
            <person name="Wahlestedt C."/>
            <person name="Mattick J.S."/>
            <person name="Hume D.A."/>
            <person name="Kai C."/>
            <person name="Sasaki D."/>
            <person name="Tomaru Y."/>
            <person name="Fukuda S."/>
            <person name="Kanamori-Katayama M."/>
            <person name="Suzuki M."/>
            <person name="Aoki J."/>
            <person name="Arakawa T."/>
            <person name="Iida J."/>
            <person name="Imamura K."/>
            <person name="Itoh M."/>
            <person name="Kato T."/>
            <person name="Kawaji H."/>
            <person name="Kawagashira N."/>
            <person name="Kawashima T."/>
            <person name="Kojima M."/>
            <person name="Kondo S."/>
            <person name="Konno H."/>
            <person name="Nakano K."/>
            <person name="Ninomiya N."/>
            <person name="Nishio T."/>
            <person name="Okada M."/>
            <person name="Plessy C."/>
            <person name="Shibata K."/>
            <person name="Shiraki T."/>
            <person name="Suzuki S."/>
            <person name="Tagami M."/>
            <person name="Waki K."/>
            <person name="Watahiki A."/>
            <person name="Okamura-Oho Y."/>
            <person name="Suzuki H."/>
            <person name="Kawai J."/>
            <person name="Hayashizaki Y."/>
        </authorList>
    </citation>
    <scope>NUCLEOTIDE SEQUENCE [LARGE SCALE MRNA]</scope>
</reference>
<reference key="2">
    <citation type="journal article" date="2009" name="PLoS Biol.">
        <title>Lineage-specific biology revealed by a finished genome assembly of the mouse.</title>
        <authorList>
            <person name="Church D.M."/>
            <person name="Goodstadt L."/>
            <person name="Hillier L.W."/>
            <person name="Zody M.C."/>
            <person name="Goldstein S."/>
            <person name="She X."/>
            <person name="Bult C.J."/>
            <person name="Agarwala R."/>
            <person name="Cherry J.L."/>
            <person name="DiCuccio M."/>
            <person name="Hlavina W."/>
            <person name="Kapustin Y."/>
            <person name="Meric P."/>
            <person name="Maglott D."/>
            <person name="Birtle Z."/>
            <person name="Marques A.C."/>
            <person name="Graves T."/>
            <person name="Zhou S."/>
            <person name="Teague B."/>
            <person name="Potamousis K."/>
            <person name="Churas C."/>
            <person name="Place M."/>
            <person name="Herschleb J."/>
            <person name="Runnheim R."/>
            <person name="Forrest D."/>
            <person name="Amos-Landgraf J."/>
            <person name="Schwartz D.C."/>
            <person name="Cheng Z."/>
            <person name="Lindblad-Toh K."/>
            <person name="Eichler E.E."/>
            <person name="Ponting C.P."/>
        </authorList>
    </citation>
    <scope>NUCLEOTIDE SEQUENCE [LARGE SCALE GENOMIC DNA]</scope>
    <source>
        <strain>C57BL/6J</strain>
    </source>
</reference>
<reference key="3">
    <citation type="journal article" date="2004" name="Genome Res.">
        <title>The status, quality, and expansion of the NIH full-length cDNA project: the Mammalian Gene Collection (MGC).</title>
        <authorList>
            <consortium name="The MGC Project Team"/>
        </authorList>
    </citation>
    <scope>NUCLEOTIDE SEQUENCE [LARGE SCALE MRNA] OF 31-879</scope>
    <source>
        <strain>FVB/N</strain>
        <tissue>Colon</tissue>
    </source>
</reference>
<protein>
    <recommendedName>
        <fullName evidence="2">Fanconi anemia core complex-associated protein 100</fullName>
    </recommendedName>
    <alternativeName>
        <fullName>Fanconi anemia-associated protein of 100 kDa</fullName>
    </alternativeName>
</protein>
<proteinExistence type="evidence at transcript level"/>
<name>FP100_MOUSE</name>
<keyword id="KW-0227">DNA damage</keyword>
<keyword id="KW-0234">DNA repair</keyword>
<keyword id="KW-0238">DNA-binding</keyword>
<keyword id="KW-0539">Nucleus</keyword>
<keyword id="KW-1185">Reference proteome</keyword>
<comment type="function">
    <text evidence="1">Plays a role in Fanconi anemia-associated DNA damage response network. Regulates FANCD2 monoubiquitination and the stability of the FA core complex. Induces chromosomal instability as well as hypersensitivity to DNA cross-linking agents, when repressed (By similarity).</text>
</comment>
<comment type="subunit">
    <text evidence="1">Belongs to the multisubunit FA complex composed of FANCA, FANCB, FANCC, FANCE, FANCF, FANCG, FANCL/PHF9, FANCM, FAAP24 and FAAP100. Forms a subcomplex with FANCB and FANCL (By similarity).</text>
</comment>
<comment type="subcellular location">
    <subcellularLocation>
        <location evidence="1">Nucleus</location>
    </subcellularLocation>
</comment>
<comment type="sequence caution" evidence="3">
    <conflict type="erroneous initiation">
        <sequence resource="EMBL-CDS" id="AAH34203"/>
    </conflict>
</comment>
<comment type="sequence caution" evidence="3">
    <conflict type="erroneous initiation">
        <sequence resource="EMBL-CDS" id="AAH48376"/>
    </conflict>
</comment>
<comment type="sequence caution" evidence="3">
    <conflict type="frameshift">
        <sequence resource="EMBL" id="AK148234"/>
    </conflict>
</comment>